<protein>
    <recommendedName>
        <fullName evidence="1">Shikimate kinase</fullName>
        <shortName evidence="1">SK</shortName>
        <ecNumber evidence="1">2.7.1.71</ecNumber>
    </recommendedName>
</protein>
<dbReference type="EC" id="2.7.1.71" evidence="1"/>
<dbReference type="EMBL" id="AP006840">
    <property type="protein sequence ID" value="BAD40934.1"/>
    <property type="molecule type" value="Genomic_DNA"/>
</dbReference>
<dbReference type="RefSeq" id="WP_011196076.1">
    <property type="nucleotide sequence ID" value="NC_006177.1"/>
</dbReference>
<dbReference type="SMR" id="Q67N09"/>
<dbReference type="STRING" id="292459.STH1949"/>
<dbReference type="KEGG" id="sth:STH1949"/>
<dbReference type="eggNOG" id="COG0703">
    <property type="taxonomic scope" value="Bacteria"/>
</dbReference>
<dbReference type="HOGENOM" id="CLU_057607_2_2_9"/>
<dbReference type="OrthoDB" id="9800332at2"/>
<dbReference type="UniPathway" id="UPA00053">
    <property type="reaction ID" value="UER00088"/>
</dbReference>
<dbReference type="Proteomes" id="UP000000417">
    <property type="component" value="Chromosome"/>
</dbReference>
<dbReference type="GO" id="GO:0005829">
    <property type="term" value="C:cytosol"/>
    <property type="evidence" value="ECO:0007669"/>
    <property type="project" value="TreeGrafter"/>
</dbReference>
<dbReference type="GO" id="GO:0005524">
    <property type="term" value="F:ATP binding"/>
    <property type="evidence" value="ECO:0007669"/>
    <property type="project" value="UniProtKB-UniRule"/>
</dbReference>
<dbReference type="GO" id="GO:0000287">
    <property type="term" value="F:magnesium ion binding"/>
    <property type="evidence" value="ECO:0007669"/>
    <property type="project" value="UniProtKB-UniRule"/>
</dbReference>
<dbReference type="GO" id="GO:0004765">
    <property type="term" value="F:shikimate kinase activity"/>
    <property type="evidence" value="ECO:0007669"/>
    <property type="project" value="UniProtKB-UniRule"/>
</dbReference>
<dbReference type="GO" id="GO:0008652">
    <property type="term" value="P:amino acid biosynthetic process"/>
    <property type="evidence" value="ECO:0007669"/>
    <property type="project" value="UniProtKB-KW"/>
</dbReference>
<dbReference type="GO" id="GO:0009073">
    <property type="term" value="P:aromatic amino acid family biosynthetic process"/>
    <property type="evidence" value="ECO:0007669"/>
    <property type="project" value="UniProtKB-KW"/>
</dbReference>
<dbReference type="GO" id="GO:0009423">
    <property type="term" value="P:chorismate biosynthetic process"/>
    <property type="evidence" value="ECO:0007669"/>
    <property type="project" value="UniProtKB-UniRule"/>
</dbReference>
<dbReference type="CDD" id="cd00464">
    <property type="entry name" value="SK"/>
    <property type="match status" value="1"/>
</dbReference>
<dbReference type="Gene3D" id="3.40.50.300">
    <property type="entry name" value="P-loop containing nucleotide triphosphate hydrolases"/>
    <property type="match status" value="1"/>
</dbReference>
<dbReference type="HAMAP" id="MF_00109">
    <property type="entry name" value="Shikimate_kinase"/>
    <property type="match status" value="1"/>
</dbReference>
<dbReference type="InterPro" id="IPR027417">
    <property type="entry name" value="P-loop_NTPase"/>
</dbReference>
<dbReference type="InterPro" id="IPR031322">
    <property type="entry name" value="Shikimate/glucono_kinase"/>
</dbReference>
<dbReference type="InterPro" id="IPR000623">
    <property type="entry name" value="Shikimate_kinase/TSH1"/>
</dbReference>
<dbReference type="InterPro" id="IPR023000">
    <property type="entry name" value="Shikimate_kinase_CS"/>
</dbReference>
<dbReference type="PANTHER" id="PTHR21087">
    <property type="entry name" value="SHIKIMATE KINASE"/>
    <property type="match status" value="1"/>
</dbReference>
<dbReference type="PANTHER" id="PTHR21087:SF16">
    <property type="entry name" value="SHIKIMATE KINASE 1, CHLOROPLASTIC"/>
    <property type="match status" value="1"/>
</dbReference>
<dbReference type="Pfam" id="PF01202">
    <property type="entry name" value="SKI"/>
    <property type="match status" value="1"/>
</dbReference>
<dbReference type="PRINTS" id="PR01100">
    <property type="entry name" value="SHIKIMTKNASE"/>
</dbReference>
<dbReference type="SUPFAM" id="SSF52540">
    <property type="entry name" value="P-loop containing nucleoside triphosphate hydrolases"/>
    <property type="match status" value="1"/>
</dbReference>
<dbReference type="PROSITE" id="PS01128">
    <property type="entry name" value="SHIKIMATE_KINASE"/>
    <property type="match status" value="1"/>
</dbReference>
<comment type="function">
    <text evidence="1">Catalyzes the specific phosphorylation of the 3-hydroxyl group of shikimic acid using ATP as a cosubstrate.</text>
</comment>
<comment type="catalytic activity">
    <reaction evidence="1">
        <text>shikimate + ATP = 3-phosphoshikimate + ADP + H(+)</text>
        <dbReference type="Rhea" id="RHEA:13121"/>
        <dbReference type="ChEBI" id="CHEBI:15378"/>
        <dbReference type="ChEBI" id="CHEBI:30616"/>
        <dbReference type="ChEBI" id="CHEBI:36208"/>
        <dbReference type="ChEBI" id="CHEBI:145989"/>
        <dbReference type="ChEBI" id="CHEBI:456216"/>
        <dbReference type="EC" id="2.7.1.71"/>
    </reaction>
</comment>
<comment type="cofactor">
    <cofactor evidence="1">
        <name>Mg(2+)</name>
        <dbReference type="ChEBI" id="CHEBI:18420"/>
    </cofactor>
    <text evidence="1">Binds 1 Mg(2+) ion per subunit.</text>
</comment>
<comment type="pathway">
    <text evidence="1">Metabolic intermediate biosynthesis; chorismate biosynthesis; chorismate from D-erythrose 4-phosphate and phosphoenolpyruvate: step 5/7.</text>
</comment>
<comment type="subunit">
    <text evidence="1">Monomer.</text>
</comment>
<comment type="subcellular location">
    <subcellularLocation>
        <location evidence="1">Cytoplasm</location>
    </subcellularLocation>
</comment>
<comment type="similarity">
    <text evidence="1">Belongs to the shikimate kinase family.</text>
</comment>
<sequence length="174" mass="19043">MNIVLVGLMGSGKTAVGRLLAERLGRPFVDTDRLVEADAGRTVADIFAAEGEEGFRRREAEVVARAAAGDNQVIATGGGAVLRTENREALRRTGFVIWLDAEPETLYDRARGQGLHRRPLLSGPDPLGRLRALAAARRPFYAQAAHVRICTDRRSLQDVVAEIMEKLQERGERG</sequence>
<organism>
    <name type="scientific">Symbiobacterium thermophilum (strain DSM 24528 / JCM 14929 / IAM 14863 / T)</name>
    <dbReference type="NCBI Taxonomy" id="292459"/>
    <lineage>
        <taxon>Bacteria</taxon>
        <taxon>Bacillati</taxon>
        <taxon>Bacillota</taxon>
        <taxon>Clostridia</taxon>
        <taxon>Eubacteriales</taxon>
        <taxon>Symbiobacteriaceae</taxon>
        <taxon>Symbiobacterium</taxon>
    </lineage>
</organism>
<feature type="chain" id="PRO_0000237941" description="Shikimate kinase">
    <location>
        <begin position="1"/>
        <end position="174"/>
    </location>
</feature>
<feature type="binding site" evidence="1">
    <location>
        <begin position="10"/>
        <end position="15"/>
    </location>
    <ligand>
        <name>ATP</name>
        <dbReference type="ChEBI" id="CHEBI:30616"/>
    </ligand>
</feature>
<feature type="binding site" evidence="1">
    <location>
        <position position="14"/>
    </location>
    <ligand>
        <name>Mg(2+)</name>
        <dbReference type="ChEBI" id="CHEBI:18420"/>
    </ligand>
</feature>
<feature type="binding site" evidence="1">
    <location>
        <position position="32"/>
    </location>
    <ligand>
        <name>substrate</name>
    </ligand>
</feature>
<feature type="binding site" evidence="1">
    <location>
        <position position="56"/>
    </location>
    <ligand>
        <name>substrate</name>
    </ligand>
</feature>
<feature type="binding site" evidence="1">
    <location>
        <position position="78"/>
    </location>
    <ligand>
        <name>substrate</name>
    </ligand>
</feature>
<feature type="binding site" evidence="1">
    <location>
        <position position="118"/>
    </location>
    <ligand>
        <name>ATP</name>
        <dbReference type="ChEBI" id="CHEBI:30616"/>
    </ligand>
</feature>
<feature type="binding site" evidence="1">
    <location>
        <position position="137"/>
    </location>
    <ligand>
        <name>substrate</name>
    </ligand>
</feature>
<feature type="binding site" evidence="1">
    <location>
        <position position="154"/>
    </location>
    <ligand>
        <name>ATP</name>
        <dbReference type="ChEBI" id="CHEBI:30616"/>
    </ligand>
</feature>
<evidence type="ECO:0000255" key="1">
    <source>
        <dbReference type="HAMAP-Rule" id="MF_00109"/>
    </source>
</evidence>
<proteinExistence type="inferred from homology"/>
<reference key="1">
    <citation type="journal article" date="2004" name="Nucleic Acids Res.">
        <title>Genome sequence of Symbiobacterium thermophilum, an uncultivable bacterium that depends on microbial commensalism.</title>
        <authorList>
            <person name="Ueda K."/>
            <person name="Yamashita A."/>
            <person name="Ishikawa J."/>
            <person name="Shimada M."/>
            <person name="Watsuji T."/>
            <person name="Morimura K."/>
            <person name="Ikeda H."/>
            <person name="Hattori M."/>
            <person name="Beppu T."/>
        </authorList>
    </citation>
    <scope>NUCLEOTIDE SEQUENCE [LARGE SCALE GENOMIC DNA]</scope>
    <source>
        <strain>DSM 24528 / JCM 14929 / IAM 14863 / T</strain>
    </source>
</reference>
<name>AROK_SYMTH</name>
<accession>Q67N09</accession>
<keyword id="KW-0028">Amino-acid biosynthesis</keyword>
<keyword id="KW-0057">Aromatic amino acid biosynthesis</keyword>
<keyword id="KW-0067">ATP-binding</keyword>
<keyword id="KW-0963">Cytoplasm</keyword>
<keyword id="KW-0418">Kinase</keyword>
<keyword id="KW-0460">Magnesium</keyword>
<keyword id="KW-0479">Metal-binding</keyword>
<keyword id="KW-0547">Nucleotide-binding</keyword>
<keyword id="KW-1185">Reference proteome</keyword>
<keyword id="KW-0808">Transferase</keyword>
<gene>
    <name evidence="1" type="primary">aroK</name>
    <name type="ordered locus">STH1949</name>
</gene>